<sequence length="151" mass="17257">MLNCQNNASLGLDLGEKTLGIALSQTGIIAQNLKTIFFDTHKYDQLIAPLQKIISQYQIKKIILGYPKHMNNDIGIKAKISNYFKKTLENKFGQVKVILWDERLSTVQAIQILKTNNKKKGKILQMKDEIAASIILQNYLDYIKLHPNKEN</sequence>
<organism>
    <name type="scientific">Aster yellows witches'-broom phytoplasma (strain AYWB)</name>
    <dbReference type="NCBI Taxonomy" id="322098"/>
    <lineage>
        <taxon>Bacteria</taxon>
        <taxon>Bacillati</taxon>
        <taxon>Mycoplasmatota</taxon>
        <taxon>Mollicutes</taxon>
        <taxon>Acholeplasmatales</taxon>
        <taxon>Acholeplasmataceae</taxon>
        <taxon>Candidatus Phytoplasma</taxon>
        <taxon>16SrI (Aster yellows group)</taxon>
    </lineage>
</organism>
<keyword id="KW-0963">Cytoplasm</keyword>
<keyword id="KW-0378">Hydrolase</keyword>
<keyword id="KW-0540">Nuclease</keyword>
<keyword id="KW-0690">Ribosome biogenesis</keyword>
<proteinExistence type="inferred from homology"/>
<feature type="chain" id="PRO_0000257503" description="Putative pre-16S rRNA nuclease">
    <location>
        <begin position="1"/>
        <end position="151"/>
    </location>
</feature>
<accession>Q2NJ58</accession>
<name>YQGF_AYWBP</name>
<dbReference type="EC" id="3.1.-.-" evidence="1"/>
<dbReference type="EMBL" id="CP000061">
    <property type="protein sequence ID" value="ABC65535.1"/>
    <property type="molecule type" value="Genomic_DNA"/>
</dbReference>
<dbReference type="SMR" id="Q2NJ58"/>
<dbReference type="STRING" id="322098.AYWB_418"/>
<dbReference type="KEGG" id="ayw:AYWB_418"/>
<dbReference type="eggNOG" id="COG0816">
    <property type="taxonomic scope" value="Bacteria"/>
</dbReference>
<dbReference type="HOGENOM" id="CLU_098240_2_0_14"/>
<dbReference type="PhylomeDB" id="Q2NJ58"/>
<dbReference type="Proteomes" id="UP000001934">
    <property type="component" value="Chromosome"/>
</dbReference>
<dbReference type="GO" id="GO:0005829">
    <property type="term" value="C:cytosol"/>
    <property type="evidence" value="ECO:0007669"/>
    <property type="project" value="TreeGrafter"/>
</dbReference>
<dbReference type="GO" id="GO:0004518">
    <property type="term" value="F:nuclease activity"/>
    <property type="evidence" value="ECO:0007669"/>
    <property type="project" value="UniProtKB-KW"/>
</dbReference>
<dbReference type="GO" id="GO:0000967">
    <property type="term" value="P:rRNA 5'-end processing"/>
    <property type="evidence" value="ECO:0007669"/>
    <property type="project" value="UniProtKB-UniRule"/>
</dbReference>
<dbReference type="CDD" id="cd16964">
    <property type="entry name" value="YqgF"/>
    <property type="match status" value="1"/>
</dbReference>
<dbReference type="Gene3D" id="3.30.420.140">
    <property type="entry name" value="YqgF/RNase H-like domain"/>
    <property type="match status" value="1"/>
</dbReference>
<dbReference type="HAMAP" id="MF_00651">
    <property type="entry name" value="Nuclease_YqgF"/>
    <property type="match status" value="1"/>
</dbReference>
<dbReference type="InterPro" id="IPR012337">
    <property type="entry name" value="RNaseH-like_sf"/>
</dbReference>
<dbReference type="InterPro" id="IPR005227">
    <property type="entry name" value="YqgF"/>
</dbReference>
<dbReference type="InterPro" id="IPR006641">
    <property type="entry name" value="YqgF/RNaseH-like_dom"/>
</dbReference>
<dbReference type="InterPro" id="IPR037027">
    <property type="entry name" value="YqgF/RNaseH-like_dom_sf"/>
</dbReference>
<dbReference type="NCBIfam" id="TIGR00250">
    <property type="entry name" value="RNAse_H_YqgF"/>
    <property type="match status" value="1"/>
</dbReference>
<dbReference type="PANTHER" id="PTHR33317">
    <property type="entry name" value="POLYNUCLEOTIDYL TRANSFERASE, RIBONUCLEASE H-LIKE SUPERFAMILY PROTEIN"/>
    <property type="match status" value="1"/>
</dbReference>
<dbReference type="PANTHER" id="PTHR33317:SF4">
    <property type="entry name" value="POLYNUCLEOTIDYL TRANSFERASE, RIBONUCLEASE H-LIKE SUPERFAMILY PROTEIN"/>
    <property type="match status" value="1"/>
</dbReference>
<dbReference type="Pfam" id="PF03652">
    <property type="entry name" value="RuvX"/>
    <property type="match status" value="1"/>
</dbReference>
<dbReference type="SMART" id="SM00732">
    <property type="entry name" value="YqgFc"/>
    <property type="match status" value="1"/>
</dbReference>
<dbReference type="SUPFAM" id="SSF53098">
    <property type="entry name" value="Ribonuclease H-like"/>
    <property type="match status" value="1"/>
</dbReference>
<comment type="function">
    <text evidence="1">Could be a nuclease involved in processing of the 5'-end of pre-16S rRNA.</text>
</comment>
<comment type="subcellular location">
    <subcellularLocation>
        <location evidence="1">Cytoplasm</location>
    </subcellularLocation>
</comment>
<comment type="similarity">
    <text evidence="1">Belongs to the YqgF nuclease family.</text>
</comment>
<protein>
    <recommendedName>
        <fullName evidence="1">Putative pre-16S rRNA nuclease</fullName>
        <ecNumber evidence="1">3.1.-.-</ecNumber>
    </recommendedName>
</protein>
<evidence type="ECO:0000255" key="1">
    <source>
        <dbReference type="HAMAP-Rule" id="MF_00651"/>
    </source>
</evidence>
<reference key="1">
    <citation type="journal article" date="2006" name="J. Bacteriol.">
        <title>Living with genome instability: the adaptation of phytoplasmas to diverse environments of their insect and plant hosts.</title>
        <authorList>
            <person name="Bai X."/>
            <person name="Zhang J."/>
            <person name="Ewing A."/>
            <person name="Miller S.A."/>
            <person name="Jancso Radek A."/>
            <person name="Shevchenko D.V."/>
            <person name="Tsukerman K."/>
            <person name="Walunas T."/>
            <person name="Lapidus A."/>
            <person name="Campbell J.W."/>
            <person name="Hogenhout S.A."/>
        </authorList>
    </citation>
    <scope>NUCLEOTIDE SEQUENCE [LARGE SCALE GENOMIC DNA]</scope>
    <source>
        <strain>AYWB</strain>
    </source>
</reference>
<gene>
    <name type="ordered locus">AYWB_418</name>
</gene>